<name>INCB_ECOLX</name>
<sequence>MTFNKISSEKGFTQVPLCLRKSKLSNLREYQNRIADIAKRSKAVLGWASTAQFGTDNQFIKDDAARAASILEAARKDPVFAGISDNATAQIATAWASALADYAAAHKSMPRPEILASCHQTLENCLIESTRNSMDATNKAMLESVAAEMMSVSDGVMRLPLFLAMILPVQLGAATADACTFIPVTRDQSDIYEVFNVAGSSFWFLCCW</sequence>
<dbReference type="EMBL" id="K02380">
    <property type="protein sequence ID" value="AAA99232.1"/>
    <property type="molecule type" value="Genomic_DNA"/>
</dbReference>
<dbReference type="EMBL" id="X02954">
    <property type="protein sequence ID" value="CAA26700.1"/>
    <property type="molecule type" value="Genomic_DNA"/>
</dbReference>
<dbReference type="SMR" id="P05831"/>
<feature type="chain" id="PRO_0000068360" description="Protein IncB">
    <location>
        <begin position="1"/>
        <end position="208"/>
    </location>
</feature>
<accession>P05831</accession>
<keyword id="KW-0614">Plasmid</keyword>
<geneLocation type="plasmid">
    <name>P1</name>
</geneLocation>
<proteinExistence type="predicted"/>
<comment type="function">
    <text>This protein is thought to be cis acting and to contain the putative attachment site on the DNA for the cellular partition apparatus.</text>
</comment>
<reference key="1">
    <citation type="journal article" date="1985" name="J. Mol. Biol.">
        <title>Partition of unit-copy miniplasmids to daughter cells. III. The DNA sequence and functional organization of the P1 partition region.</title>
        <authorList>
            <person name="Abeles A.L."/>
            <person name="Friedman S.A."/>
            <person name="Austin S.J."/>
        </authorList>
    </citation>
    <scope>NUCLEOTIDE SEQUENCE [GENOMIC DNA]</scope>
</reference>
<protein>
    <recommendedName>
        <fullName>Protein IncB</fullName>
    </recommendedName>
</protein>
<gene>
    <name type="primary">incB</name>
</gene>
<organism>
    <name type="scientific">Escherichia coli</name>
    <dbReference type="NCBI Taxonomy" id="562"/>
    <lineage>
        <taxon>Bacteria</taxon>
        <taxon>Pseudomonadati</taxon>
        <taxon>Pseudomonadota</taxon>
        <taxon>Gammaproteobacteria</taxon>
        <taxon>Enterobacterales</taxon>
        <taxon>Enterobacteriaceae</taxon>
        <taxon>Escherichia</taxon>
    </lineage>
</organism>